<proteinExistence type="inferred from homology"/>
<accession>A4G2A7</accession>
<protein>
    <recommendedName>
        <fullName evidence="1">tRNA N6-adenosine threonylcarbamoyltransferase</fullName>
        <ecNumber evidence="1">2.3.1.234</ecNumber>
    </recommendedName>
    <alternativeName>
        <fullName evidence="1">N6-L-threonylcarbamoyladenine synthase</fullName>
        <shortName evidence="1">t(6)A synthase</shortName>
    </alternativeName>
    <alternativeName>
        <fullName evidence="1">t(6)A37 threonylcarbamoyladenosine biosynthesis protein TsaD</fullName>
    </alternativeName>
    <alternativeName>
        <fullName evidence="1">tRNA threonylcarbamoyladenosine biosynthesis protein TsaD</fullName>
    </alternativeName>
</protein>
<organism>
    <name type="scientific">Herminiimonas arsenicoxydans</name>
    <dbReference type="NCBI Taxonomy" id="204773"/>
    <lineage>
        <taxon>Bacteria</taxon>
        <taxon>Pseudomonadati</taxon>
        <taxon>Pseudomonadota</taxon>
        <taxon>Betaproteobacteria</taxon>
        <taxon>Burkholderiales</taxon>
        <taxon>Oxalobacteraceae</taxon>
        <taxon>Herminiimonas</taxon>
    </lineage>
</organism>
<reference key="1">
    <citation type="journal article" date="2007" name="PLoS Genet.">
        <title>A tale of two oxidation states: bacterial colonization of arsenic-rich environments.</title>
        <authorList>
            <person name="Muller D."/>
            <person name="Medigue C."/>
            <person name="Koechler S."/>
            <person name="Barbe V."/>
            <person name="Barakat M."/>
            <person name="Talla E."/>
            <person name="Bonnefoy V."/>
            <person name="Krin E."/>
            <person name="Arsene-Ploetze F."/>
            <person name="Carapito C."/>
            <person name="Chandler M."/>
            <person name="Cournoyer B."/>
            <person name="Cruveiller S."/>
            <person name="Dossat C."/>
            <person name="Duval S."/>
            <person name="Heymann M."/>
            <person name="Leize E."/>
            <person name="Lieutaud A."/>
            <person name="Lievremont D."/>
            <person name="Makita Y."/>
            <person name="Mangenot S."/>
            <person name="Nitschke W."/>
            <person name="Ortet P."/>
            <person name="Perdrial N."/>
            <person name="Schoepp B."/>
            <person name="Siguier P."/>
            <person name="Simeonova D.D."/>
            <person name="Rouy Z."/>
            <person name="Segurens B."/>
            <person name="Turlin E."/>
            <person name="Vallenet D."/>
            <person name="van Dorsselaer A."/>
            <person name="Weiss S."/>
            <person name="Weissenbach J."/>
            <person name="Lett M.-C."/>
            <person name="Danchin A."/>
            <person name="Bertin P.N."/>
        </authorList>
    </citation>
    <scope>NUCLEOTIDE SEQUENCE [LARGE SCALE GENOMIC DNA]</scope>
    <source>
        <strain>ULPAs1</strain>
    </source>
</reference>
<name>TSAD_HERAR</name>
<dbReference type="EC" id="2.3.1.234" evidence="1"/>
<dbReference type="EMBL" id="CU207211">
    <property type="protein sequence ID" value="CAL60644.1"/>
    <property type="molecule type" value="Genomic_DNA"/>
</dbReference>
<dbReference type="SMR" id="A4G2A7"/>
<dbReference type="STRING" id="204773.HEAR0426"/>
<dbReference type="KEGG" id="har:HEAR0426"/>
<dbReference type="eggNOG" id="COG0533">
    <property type="taxonomic scope" value="Bacteria"/>
</dbReference>
<dbReference type="HOGENOM" id="CLU_023208_0_0_4"/>
<dbReference type="OrthoDB" id="9806197at2"/>
<dbReference type="Proteomes" id="UP000006697">
    <property type="component" value="Chromosome"/>
</dbReference>
<dbReference type="GO" id="GO:0005737">
    <property type="term" value="C:cytoplasm"/>
    <property type="evidence" value="ECO:0007669"/>
    <property type="project" value="UniProtKB-SubCell"/>
</dbReference>
<dbReference type="GO" id="GO:0005506">
    <property type="term" value="F:iron ion binding"/>
    <property type="evidence" value="ECO:0007669"/>
    <property type="project" value="UniProtKB-UniRule"/>
</dbReference>
<dbReference type="GO" id="GO:0061711">
    <property type="term" value="F:N(6)-L-threonylcarbamoyladenine synthase activity"/>
    <property type="evidence" value="ECO:0007669"/>
    <property type="project" value="UniProtKB-EC"/>
</dbReference>
<dbReference type="GO" id="GO:0002949">
    <property type="term" value="P:tRNA threonylcarbamoyladenosine modification"/>
    <property type="evidence" value="ECO:0007669"/>
    <property type="project" value="UniProtKB-UniRule"/>
</dbReference>
<dbReference type="CDD" id="cd24133">
    <property type="entry name" value="ASKHA_NBD_TsaD_bac"/>
    <property type="match status" value="1"/>
</dbReference>
<dbReference type="FunFam" id="3.30.420.40:FF:000012">
    <property type="entry name" value="tRNA N6-adenosine threonylcarbamoyltransferase"/>
    <property type="match status" value="1"/>
</dbReference>
<dbReference type="FunFam" id="3.30.420.40:FF:000040">
    <property type="entry name" value="tRNA N6-adenosine threonylcarbamoyltransferase"/>
    <property type="match status" value="1"/>
</dbReference>
<dbReference type="Gene3D" id="3.30.420.40">
    <property type="match status" value="2"/>
</dbReference>
<dbReference type="HAMAP" id="MF_01445">
    <property type="entry name" value="TsaD"/>
    <property type="match status" value="1"/>
</dbReference>
<dbReference type="InterPro" id="IPR043129">
    <property type="entry name" value="ATPase_NBD"/>
</dbReference>
<dbReference type="InterPro" id="IPR000905">
    <property type="entry name" value="Gcp-like_dom"/>
</dbReference>
<dbReference type="InterPro" id="IPR017861">
    <property type="entry name" value="KAE1/TsaD"/>
</dbReference>
<dbReference type="InterPro" id="IPR017860">
    <property type="entry name" value="Peptidase_M22_CS"/>
</dbReference>
<dbReference type="InterPro" id="IPR022450">
    <property type="entry name" value="TsaD"/>
</dbReference>
<dbReference type="NCBIfam" id="TIGR00329">
    <property type="entry name" value="gcp_kae1"/>
    <property type="match status" value="1"/>
</dbReference>
<dbReference type="NCBIfam" id="TIGR03723">
    <property type="entry name" value="T6A_TsaD_YgjD"/>
    <property type="match status" value="1"/>
</dbReference>
<dbReference type="PANTHER" id="PTHR11735">
    <property type="entry name" value="TRNA N6-ADENOSINE THREONYLCARBAMOYLTRANSFERASE"/>
    <property type="match status" value="1"/>
</dbReference>
<dbReference type="PANTHER" id="PTHR11735:SF6">
    <property type="entry name" value="TRNA N6-ADENOSINE THREONYLCARBAMOYLTRANSFERASE, MITOCHONDRIAL"/>
    <property type="match status" value="1"/>
</dbReference>
<dbReference type="Pfam" id="PF00814">
    <property type="entry name" value="TsaD"/>
    <property type="match status" value="1"/>
</dbReference>
<dbReference type="PRINTS" id="PR00789">
    <property type="entry name" value="OSIALOPTASE"/>
</dbReference>
<dbReference type="SUPFAM" id="SSF53067">
    <property type="entry name" value="Actin-like ATPase domain"/>
    <property type="match status" value="2"/>
</dbReference>
<dbReference type="PROSITE" id="PS01016">
    <property type="entry name" value="GLYCOPROTEASE"/>
    <property type="match status" value="1"/>
</dbReference>
<sequence>MLVLGIESSCDETGLALYDTQRGLLAHALYSQVKMHEEYGGVVPELASRDHIRRAIPLLEQVFSESGVAHGAIDAIAYTQGPGLAGALLVGASVACGLGLALDKPVLGIHHLEGHLLSPLLASEPPEFPFIALLVSGGHTQLMRVDGIGQYTMLGETLDDAAGEAFDKSAKLLGLGYPGGPAISRMAEFGDPTAYKLPRPMLHSKNLDFSFSGLKTAVLTVVKNQTTNICEQDKANIARAFVDAIVEVLTAKCVTALKHTGLKRLVIAGGVGANQQLRESLNAAAAKKHFKVFYPELEFCTDNGAMIAFAGAMRLQINPDAAKKDYAFNVKPRWPLDSIREI</sequence>
<gene>
    <name evidence="1" type="primary">tsaD</name>
    <name type="synonym">gcp</name>
    <name type="ordered locus">HEAR0426</name>
</gene>
<keyword id="KW-0012">Acyltransferase</keyword>
<keyword id="KW-0963">Cytoplasm</keyword>
<keyword id="KW-0408">Iron</keyword>
<keyword id="KW-0479">Metal-binding</keyword>
<keyword id="KW-1185">Reference proteome</keyword>
<keyword id="KW-0808">Transferase</keyword>
<keyword id="KW-0819">tRNA processing</keyword>
<comment type="function">
    <text evidence="1">Required for the formation of a threonylcarbamoyl group on adenosine at position 37 (t(6)A37) in tRNAs that read codons beginning with adenine. Is involved in the transfer of the threonylcarbamoyl moiety of threonylcarbamoyl-AMP (TC-AMP) to the N6 group of A37, together with TsaE and TsaB. TsaD likely plays a direct catalytic role in this reaction.</text>
</comment>
<comment type="catalytic activity">
    <reaction evidence="1">
        <text>L-threonylcarbamoyladenylate + adenosine(37) in tRNA = N(6)-L-threonylcarbamoyladenosine(37) in tRNA + AMP + H(+)</text>
        <dbReference type="Rhea" id="RHEA:37059"/>
        <dbReference type="Rhea" id="RHEA-COMP:10162"/>
        <dbReference type="Rhea" id="RHEA-COMP:10163"/>
        <dbReference type="ChEBI" id="CHEBI:15378"/>
        <dbReference type="ChEBI" id="CHEBI:73682"/>
        <dbReference type="ChEBI" id="CHEBI:74411"/>
        <dbReference type="ChEBI" id="CHEBI:74418"/>
        <dbReference type="ChEBI" id="CHEBI:456215"/>
        <dbReference type="EC" id="2.3.1.234"/>
    </reaction>
</comment>
<comment type="cofactor">
    <cofactor evidence="1">
        <name>Fe(2+)</name>
        <dbReference type="ChEBI" id="CHEBI:29033"/>
    </cofactor>
    <text evidence="1">Binds 1 Fe(2+) ion per subunit.</text>
</comment>
<comment type="subcellular location">
    <subcellularLocation>
        <location evidence="1">Cytoplasm</location>
    </subcellularLocation>
</comment>
<comment type="similarity">
    <text evidence="1">Belongs to the KAE1 / TsaD family.</text>
</comment>
<feature type="chain" id="PRO_0000303385" description="tRNA N6-adenosine threonylcarbamoyltransferase">
    <location>
        <begin position="1"/>
        <end position="342"/>
    </location>
</feature>
<feature type="binding site" evidence="1">
    <location>
        <position position="111"/>
    </location>
    <ligand>
        <name>Fe cation</name>
        <dbReference type="ChEBI" id="CHEBI:24875"/>
    </ligand>
</feature>
<feature type="binding site" evidence="1">
    <location>
        <position position="115"/>
    </location>
    <ligand>
        <name>Fe cation</name>
        <dbReference type="ChEBI" id="CHEBI:24875"/>
    </ligand>
</feature>
<feature type="binding site" evidence="1">
    <location>
        <begin position="134"/>
        <end position="138"/>
    </location>
    <ligand>
        <name>substrate</name>
    </ligand>
</feature>
<feature type="binding site" evidence="1">
    <location>
        <position position="167"/>
    </location>
    <ligand>
        <name>substrate</name>
    </ligand>
</feature>
<feature type="binding site" evidence="1">
    <location>
        <position position="180"/>
    </location>
    <ligand>
        <name>substrate</name>
    </ligand>
</feature>
<feature type="binding site" evidence="1">
    <location>
        <position position="274"/>
    </location>
    <ligand>
        <name>substrate</name>
    </ligand>
</feature>
<feature type="binding site" evidence="1">
    <location>
        <position position="302"/>
    </location>
    <ligand>
        <name>Fe cation</name>
        <dbReference type="ChEBI" id="CHEBI:24875"/>
    </ligand>
</feature>
<evidence type="ECO:0000255" key="1">
    <source>
        <dbReference type="HAMAP-Rule" id="MF_01445"/>
    </source>
</evidence>